<evidence type="ECO:0000255" key="1">
    <source>
        <dbReference type="HAMAP-Rule" id="MF_00009"/>
    </source>
</evidence>
<comment type="function">
    <text evidence="1">Single strand-specific metallo-endoribonuclease involved in late-stage 70S ribosome quality control and in maturation of the 3' terminus of the 16S rRNA.</text>
</comment>
<comment type="cofactor">
    <cofactor evidence="1">
        <name>Zn(2+)</name>
        <dbReference type="ChEBI" id="CHEBI:29105"/>
    </cofactor>
    <text evidence="1">Binds 1 zinc ion.</text>
</comment>
<comment type="subcellular location">
    <subcellularLocation>
        <location evidence="1">Cytoplasm</location>
    </subcellularLocation>
</comment>
<comment type="similarity">
    <text evidence="1">Belongs to the endoribonuclease YbeY family.</text>
</comment>
<protein>
    <recommendedName>
        <fullName evidence="1">Endoribonuclease YbeY</fullName>
        <ecNumber evidence="1">3.1.-.-</ecNumber>
    </recommendedName>
</protein>
<gene>
    <name evidence="1" type="primary">ybeY</name>
    <name type="ordered locus">SERP1137</name>
</gene>
<accession>Q5HNX7</accession>
<organism>
    <name type="scientific">Staphylococcus epidermidis (strain ATCC 35984 / DSM 28319 / BCRC 17069 / CCUG 31568 / BM 3577 / RP62A)</name>
    <dbReference type="NCBI Taxonomy" id="176279"/>
    <lineage>
        <taxon>Bacteria</taxon>
        <taxon>Bacillati</taxon>
        <taxon>Bacillota</taxon>
        <taxon>Bacilli</taxon>
        <taxon>Bacillales</taxon>
        <taxon>Staphylococcaceae</taxon>
        <taxon>Staphylococcus</taxon>
    </lineage>
</organism>
<sequence>MFTIDFSDHTGLVETSWLDQIDQLLTFAKKKENIHNDAELSVTFVDKDEIQNINKVYRDKDKVTDVISFALEEDEPEIDFNDFDIPRVLGDIIICTDVAKEQSESYGHSFERELGFLALHGFLHLLGYDHMNDNDEKEMFGRQDAILNEFGLTRN</sequence>
<keyword id="KW-0963">Cytoplasm</keyword>
<keyword id="KW-0255">Endonuclease</keyword>
<keyword id="KW-0378">Hydrolase</keyword>
<keyword id="KW-0479">Metal-binding</keyword>
<keyword id="KW-0540">Nuclease</keyword>
<keyword id="KW-1185">Reference proteome</keyword>
<keyword id="KW-0690">Ribosome biogenesis</keyword>
<keyword id="KW-0698">rRNA processing</keyword>
<keyword id="KW-0862">Zinc</keyword>
<dbReference type="EC" id="3.1.-.-" evidence="1"/>
<dbReference type="EMBL" id="CP000029">
    <property type="protein sequence ID" value="AAW54465.1"/>
    <property type="molecule type" value="Genomic_DNA"/>
</dbReference>
<dbReference type="RefSeq" id="WP_002486239.1">
    <property type="nucleotide sequence ID" value="NC_002976.3"/>
</dbReference>
<dbReference type="SMR" id="Q5HNX7"/>
<dbReference type="STRING" id="176279.SERP1137"/>
<dbReference type="KEGG" id="ser:SERP1137"/>
<dbReference type="eggNOG" id="COG0319">
    <property type="taxonomic scope" value="Bacteria"/>
</dbReference>
<dbReference type="HOGENOM" id="CLU_106710_3_0_9"/>
<dbReference type="Proteomes" id="UP000000531">
    <property type="component" value="Chromosome"/>
</dbReference>
<dbReference type="GO" id="GO:0005737">
    <property type="term" value="C:cytoplasm"/>
    <property type="evidence" value="ECO:0007669"/>
    <property type="project" value="UniProtKB-SubCell"/>
</dbReference>
<dbReference type="GO" id="GO:0004222">
    <property type="term" value="F:metalloendopeptidase activity"/>
    <property type="evidence" value="ECO:0007669"/>
    <property type="project" value="InterPro"/>
</dbReference>
<dbReference type="GO" id="GO:0004521">
    <property type="term" value="F:RNA endonuclease activity"/>
    <property type="evidence" value="ECO:0007669"/>
    <property type="project" value="UniProtKB-UniRule"/>
</dbReference>
<dbReference type="GO" id="GO:0008270">
    <property type="term" value="F:zinc ion binding"/>
    <property type="evidence" value="ECO:0007669"/>
    <property type="project" value="UniProtKB-UniRule"/>
</dbReference>
<dbReference type="GO" id="GO:0006364">
    <property type="term" value="P:rRNA processing"/>
    <property type="evidence" value="ECO:0007669"/>
    <property type="project" value="UniProtKB-UniRule"/>
</dbReference>
<dbReference type="Gene3D" id="3.40.390.30">
    <property type="entry name" value="Metalloproteases ('zincins'), catalytic domain"/>
    <property type="match status" value="1"/>
</dbReference>
<dbReference type="HAMAP" id="MF_00009">
    <property type="entry name" value="Endoribonucl_YbeY"/>
    <property type="match status" value="1"/>
</dbReference>
<dbReference type="InterPro" id="IPR023091">
    <property type="entry name" value="MetalPrtase_cat_dom_sf_prd"/>
</dbReference>
<dbReference type="InterPro" id="IPR002036">
    <property type="entry name" value="YbeY"/>
</dbReference>
<dbReference type="InterPro" id="IPR020549">
    <property type="entry name" value="YbeY_CS"/>
</dbReference>
<dbReference type="NCBIfam" id="TIGR00043">
    <property type="entry name" value="rRNA maturation RNase YbeY"/>
    <property type="match status" value="1"/>
</dbReference>
<dbReference type="PANTHER" id="PTHR46986">
    <property type="entry name" value="ENDORIBONUCLEASE YBEY, CHLOROPLASTIC"/>
    <property type="match status" value="1"/>
</dbReference>
<dbReference type="PANTHER" id="PTHR46986:SF1">
    <property type="entry name" value="ENDORIBONUCLEASE YBEY, CHLOROPLASTIC"/>
    <property type="match status" value="1"/>
</dbReference>
<dbReference type="Pfam" id="PF02130">
    <property type="entry name" value="YbeY"/>
    <property type="match status" value="1"/>
</dbReference>
<dbReference type="SUPFAM" id="SSF55486">
    <property type="entry name" value="Metalloproteases ('zincins'), catalytic domain"/>
    <property type="match status" value="1"/>
</dbReference>
<dbReference type="PROSITE" id="PS01306">
    <property type="entry name" value="UPF0054"/>
    <property type="match status" value="1"/>
</dbReference>
<reference key="1">
    <citation type="journal article" date="2005" name="J. Bacteriol.">
        <title>Insights on evolution of virulence and resistance from the complete genome analysis of an early methicillin-resistant Staphylococcus aureus strain and a biofilm-producing methicillin-resistant Staphylococcus epidermidis strain.</title>
        <authorList>
            <person name="Gill S.R."/>
            <person name="Fouts D.E."/>
            <person name="Archer G.L."/>
            <person name="Mongodin E.F."/>
            <person name="DeBoy R.T."/>
            <person name="Ravel J."/>
            <person name="Paulsen I.T."/>
            <person name="Kolonay J.F."/>
            <person name="Brinkac L.M."/>
            <person name="Beanan M.J."/>
            <person name="Dodson R.J."/>
            <person name="Daugherty S.C."/>
            <person name="Madupu R."/>
            <person name="Angiuoli S.V."/>
            <person name="Durkin A.S."/>
            <person name="Haft D.H."/>
            <person name="Vamathevan J.J."/>
            <person name="Khouri H."/>
            <person name="Utterback T.R."/>
            <person name="Lee C."/>
            <person name="Dimitrov G."/>
            <person name="Jiang L."/>
            <person name="Qin H."/>
            <person name="Weidman J."/>
            <person name="Tran K."/>
            <person name="Kang K.H."/>
            <person name="Hance I.R."/>
            <person name="Nelson K.E."/>
            <person name="Fraser C.M."/>
        </authorList>
    </citation>
    <scope>NUCLEOTIDE SEQUENCE [LARGE SCALE GENOMIC DNA]</scope>
    <source>
        <strain>ATCC 35984 / DSM 28319 / BCRC 17069 / CCUG 31568 / BM 3577 / RP62A</strain>
    </source>
</reference>
<proteinExistence type="inferred from homology"/>
<name>YBEY_STAEQ</name>
<feature type="chain" id="PRO_0000102534" description="Endoribonuclease YbeY">
    <location>
        <begin position="1"/>
        <end position="155"/>
    </location>
</feature>
<feature type="binding site" evidence="1">
    <location>
        <position position="120"/>
    </location>
    <ligand>
        <name>Zn(2+)</name>
        <dbReference type="ChEBI" id="CHEBI:29105"/>
        <note>catalytic</note>
    </ligand>
</feature>
<feature type="binding site" evidence="1">
    <location>
        <position position="124"/>
    </location>
    <ligand>
        <name>Zn(2+)</name>
        <dbReference type="ChEBI" id="CHEBI:29105"/>
        <note>catalytic</note>
    </ligand>
</feature>
<feature type="binding site" evidence="1">
    <location>
        <position position="130"/>
    </location>
    <ligand>
        <name>Zn(2+)</name>
        <dbReference type="ChEBI" id="CHEBI:29105"/>
        <note>catalytic</note>
    </ligand>
</feature>